<reference key="1">
    <citation type="journal article" date="2000" name="Proc. Natl. Acad. Sci. U.S.A.">
        <title>Molecular cloning and characterization of a lipid phosphohydrolase that degrades sphingosine-1-phosphate and induces cell death.</title>
        <authorList>
            <person name="Mandala S.M."/>
            <person name="Thornton R."/>
            <person name="Galve-Roperh I."/>
            <person name="Poulton S."/>
            <person name="Peterson C."/>
            <person name="Olivera A."/>
            <person name="Bergstrom J."/>
            <person name="Kurtz M.B."/>
            <person name="Spiegel S."/>
        </authorList>
    </citation>
    <scope>NUCLEOTIDE SEQUENCE [MRNA]</scope>
    <scope>FUNCTION</scope>
    <scope>TISSUE SPECIFICITY</scope>
</reference>
<reference key="2">
    <citation type="submission" date="2001-08" db="EMBL/GenBank/DDBJ databases">
        <authorList>
            <person name="Thompson D."/>
            <person name="Pyne S."/>
        </authorList>
    </citation>
    <scope>NUCLEOTIDE SEQUENCE [MRNA]</scope>
</reference>
<reference key="3">
    <citation type="journal article" date="2004" name="Genome Res.">
        <title>The status, quality, and expansion of the NIH full-length cDNA project: the Mammalian Gene Collection (MGC).</title>
        <authorList>
            <consortium name="The MGC Project Team"/>
        </authorList>
    </citation>
    <scope>NUCLEOTIDE SEQUENCE [LARGE SCALE MRNA]</scope>
    <source>
        <strain>FVB/N-3</strain>
        <tissue>Mammary cancer</tissue>
    </source>
</reference>
<reference key="4">
    <citation type="journal article" date="2002" name="J. Biol. Chem.">
        <title>Characterization of murine sphingosine-1-phosphate phosphohydrolase.</title>
        <authorList>
            <person name="Le Stunff H."/>
            <person name="Peterson C."/>
            <person name="Thornton R."/>
            <person name="Milstien S."/>
            <person name="Mandala S.M."/>
            <person name="Spiegel S."/>
        </authorList>
    </citation>
    <scope>FUNCTION</scope>
    <scope>BIOPHYSICOCHEMICAL PROPERTIES</scope>
    <scope>ACTIVITY REGULATION</scope>
    <scope>CATALYTIC ACTIVITY</scope>
</reference>
<reference key="5">
    <citation type="journal article" date="2003" name="J. Biol. Chem.">
        <title>Identification and characterization of a novel human sphingosine-1-phosphate phosphohydrolase, hSPP2.</title>
        <authorList>
            <person name="Ogawa C."/>
            <person name="Kihara A."/>
            <person name="Gokoh M."/>
            <person name="Igarashi Y."/>
        </authorList>
    </citation>
    <scope>CATALYTIC ACTIVITY</scope>
</reference>
<reference key="6">
    <citation type="journal article" date="2002" name="J. Cell Biol.">
        <title>Sphingosine-1-phosphate phosphohydrolase in regulation of sphingolipid metabolism and apoptosis.</title>
        <authorList>
            <person name="Le Stunff H."/>
            <person name="Galve-Roperh I."/>
            <person name="Peterson C."/>
            <person name="Milstien S."/>
            <person name="Spiegel S."/>
        </authorList>
    </citation>
    <scope>FUNCTION</scope>
    <scope>SUBCELLULAR LOCATION</scope>
</reference>
<reference key="7">
    <citation type="journal article" date="2007" name="J. Biol. Chem.">
        <title>Recycling of sphingosine is regulated by the concerted actions of sphingosine-1-phosphate phosphohydrolase 1 and sphingosine kinase 2.</title>
        <authorList>
            <person name="Le Stunff H."/>
            <person name="Giussani P."/>
            <person name="Maceyka M."/>
            <person name="Lepine S."/>
            <person name="Milstien S."/>
            <person name="Spiegel S."/>
        </authorList>
    </citation>
    <scope>FUNCTION</scope>
</reference>
<reference key="8">
    <citation type="journal article" date="2007" name="Mol. Cell. Proteomics">
        <title>Qualitative and quantitative analyses of protein phosphorylation in naive and stimulated mouse synaptosomal preparations.</title>
        <authorList>
            <person name="Munton R.P."/>
            <person name="Tweedie-Cullen R."/>
            <person name="Livingstone-Zatchej M."/>
            <person name="Weinandy F."/>
            <person name="Waidelich M."/>
            <person name="Longo D."/>
            <person name="Gehrig P."/>
            <person name="Potthast F."/>
            <person name="Rutishauser D."/>
            <person name="Gerrits B."/>
            <person name="Panse C."/>
            <person name="Schlapbach R."/>
            <person name="Mansuy I.M."/>
        </authorList>
    </citation>
    <scope>IDENTIFICATION BY MASS SPECTROMETRY [LARGE SCALE ANALYSIS]</scope>
    <source>
        <tissue>Brain cortex</tissue>
    </source>
</reference>
<reference key="9">
    <citation type="journal article" date="2007" name="Proc. Natl. Acad. Sci. U.S.A.">
        <title>Large-scale phosphorylation analysis of mouse liver.</title>
        <authorList>
            <person name="Villen J."/>
            <person name="Beausoleil S.A."/>
            <person name="Gerber S.A."/>
            <person name="Gygi S.P."/>
        </authorList>
    </citation>
    <scope>PHOSPHORYLATION [LARGE SCALE ANALYSIS] AT SER-101</scope>
    <scope>IDENTIFICATION BY MASS SPECTROMETRY [LARGE SCALE ANALYSIS]</scope>
    <source>
        <tissue>Liver</tissue>
    </source>
</reference>
<reference key="10">
    <citation type="journal article" date="2009" name="Mol. Cell. Proteomics">
        <title>Large scale localization of protein phosphorylation by use of electron capture dissociation mass spectrometry.</title>
        <authorList>
            <person name="Sweet S.M."/>
            <person name="Bailey C.M."/>
            <person name="Cunningham D.L."/>
            <person name="Heath J.K."/>
            <person name="Cooper H.J."/>
        </authorList>
    </citation>
    <scope>PHOSPHORYLATION [LARGE SCALE ANALYSIS] AT SER-101</scope>
    <scope>IDENTIFICATION BY MASS SPECTROMETRY [LARGE SCALE ANALYSIS]</scope>
    <source>
        <tissue>Embryonic fibroblast</tissue>
    </source>
</reference>
<reference key="11">
    <citation type="journal article" date="2010" name="Cell">
        <title>A tissue-specific atlas of mouse protein phosphorylation and expression.</title>
        <authorList>
            <person name="Huttlin E.L."/>
            <person name="Jedrychowski M.P."/>
            <person name="Elias J.E."/>
            <person name="Goswami T."/>
            <person name="Rad R."/>
            <person name="Beausoleil S.A."/>
            <person name="Villen J."/>
            <person name="Haas W."/>
            <person name="Sowa M.E."/>
            <person name="Gygi S.P."/>
        </authorList>
    </citation>
    <scope>PHOSPHORYLATION [LARGE SCALE ANALYSIS] AT SER-101</scope>
    <scope>IDENTIFICATION BY MASS SPECTROMETRY [LARGE SCALE ANALYSIS]</scope>
    <source>
        <tissue>Brain</tissue>
        <tissue>Brown adipose tissue</tissue>
        <tissue>Heart</tissue>
        <tissue>Kidney</tissue>
        <tissue>Liver</tissue>
        <tissue>Lung</tissue>
        <tissue>Pancreas</tissue>
        <tissue>Spleen</tissue>
        <tissue>Testis</tissue>
    </source>
</reference>
<reference key="12">
    <citation type="journal article" date="2013" name="J. Biol. Chem.">
        <title>Sphingosine-1-phosphate phosphatase 1 regulates keratinocyte differentiation and epidermal homeostasis.</title>
        <authorList>
            <person name="Allende M.L."/>
            <person name="Sipe L.M."/>
            <person name="Tuymetova G."/>
            <person name="Wilson-Henjum K.L."/>
            <person name="Chen W."/>
            <person name="Proia R.L."/>
        </authorList>
    </citation>
    <scope>FUNCTION</scope>
    <scope>DISRUPTION PHENOTYPE</scope>
</reference>
<sequence length="430" mass="47744">MSLGQRLALLASRLQEPQRVASFQRLCGVEVPLSSPAADEDAETEVRGAPGEPRRRGRQPGAEDSPAKADCCGAPNGVRNGLAAEPGPTGPRRAGSQRRNSLTGEEGELVKVSNLPLYYLFCLGTELGNELFYILFFPFWIWNLDPFVGRRLVIIWVLVMYLGQCTKDIIRWPRPASPPVIKLEVFYNSEYSMPSTHAMSGTAIPIAMFLLTYGRWQYPLIYGLILIPCWSSLVCLSRIYMGMHSILDVIAGFLYTILILIIFYPLVDLIDNFNQTYKYAPLIIIGLHLILGIFSFTLDTWSTSRGDTAEILGSGAGIACGSHAAYTLGLSLEPSLHMLPLAIPPLTVTLFGKAILRIVLGMLLVLFVRDIMKKITIPLACKLSSIPCHDIRQARQHMEVELPYRYITYGMVGFSITFLVPYVFSFIGIS</sequence>
<gene>
    <name evidence="13" type="primary">Sgpp1</name>
    <name evidence="11" type="synonym">Spp1</name>
    <name type="synonym">Spph1</name>
</gene>
<proteinExistence type="evidence at protein level"/>
<evidence type="ECO:0000250" key="1">
    <source>
        <dbReference type="UniProtKB" id="P0A924"/>
    </source>
</evidence>
<evidence type="ECO:0000250" key="2">
    <source>
        <dbReference type="UniProtKB" id="Q9BX95"/>
    </source>
</evidence>
<evidence type="ECO:0000255" key="3"/>
<evidence type="ECO:0000256" key="4">
    <source>
        <dbReference type="SAM" id="MobiDB-lite"/>
    </source>
</evidence>
<evidence type="ECO:0000269" key="5">
    <source>
    </source>
</evidence>
<evidence type="ECO:0000269" key="6">
    <source>
    </source>
</evidence>
<evidence type="ECO:0000269" key="7">
    <source>
    </source>
</evidence>
<evidence type="ECO:0000269" key="8">
    <source>
    </source>
</evidence>
<evidence type="ECO:0000269" key="9">
    <source>
    </source>
</evidence>
<evidence type="ECO:0000269" key="10">
    <source>
    </source>
</evidence>
<evidence type="ECO:0000303" key="11">
    <source>
    </source>
</evidence>
<evidence type="ECO:0000305" key="12"/>
<evidence type="ECO:0000312" key="13">
    <source>
        <dbReference type="MGI" id="MGI:2135760"/>
    </source>
</evidence>
<evidence type="ECO:0007744" key="14">
    <source>
    </source>
</evidence>
<evidence type="ECO:0007744" key="15">
    <source>
    </source>
</evidence>
<evidence type="ECO:0007744" key="16">
    <source>
    </source>
</evidence>
<protein>
    <recommendedName>
        <fullName evidence="12">Sphingosine-1-phosphate phosphatase 1</fullName>
        <shortName>SPP</shortName>
        <shortName>SPPase1</shortName>
        <shortName>mSPP1</shortName>
        <ecNumber evidence="8">3.1.3.-</ecNumber>
    </recommendedName>
    <alternativeName>
        <fullName>Sphingosine-1-phosphatase 1</fullName>
    </alternativeName>
</protein>
<dbReference type="EC" id="3.1.3.-" evidence="8"/>
<dbReference type="EMBL" id="AF247177">
    <property type="protein sequence ID" value="AAF90052.1"/>
    <property type="molecule type" value="mRNA"/>
</dbReference>
<dbReference type="EMBL" id="AF415215">
    <property type="protein sequence ID" value="AAL07501.1"/>
    <property type="molecule type" value="mRNA"/>
</dbReference>
<dbReference type="EMBL" id="BC037592">
    <property type="protein sequence ID" value="AAH37592.1"/>
    <property type="molecule type" value="mRNA"/>
</dbReference>
<dbReference type="CCDS" id="CCDS25986.1"/>
<dbReference type="RefSeq" id="NP_109675.1">
    <property type="nucleotide sequence ID" value="NM_030750.3"/>
</dbReference>
<dbReference type="BioGRID" id="219882">
    <property type="interactions" value="1"/>
</dbReference>
<dbReference type="FunCoup" id="Q9JI99">
    <property type="interactions" value="1347"/>
</dbReference>
<dbReference type="STRING" id="10090.ENSMUSP00000021450"/>
<dbReference type="SwissLipids" id="SLP:000000381"/>
<dbReference type="GlyGen" id="Q9JI99">
    <property type="glycosylation" value="1 site"/>
</dbReference>
<dbReference type="iPTMnet" id="Q9JI99"/>
<dbReference type="PhosphoSitePlus" id="Q9JI99"/>
<dbReference type="SwissPalm" id="Q9JI99"/>
<dbReference type="jPOST" id="Q9JI99"/>
<dbReference type="PaxDb" id="10090-ENSMUSP00000021450"/>
<dbReference type="ProteomicsDB" id="261206"/>
<dbReference type="Pumba" id="Q9JI99"/>
<dbReference type="Antibodypedia" id="47291">
    <property type="antibodies" value="90 antibodies from 18 providers"/>
</dbReference>
<dbReference type="DNASU" id="81535"/>
<dbReference type="Ensembl" id="ENSMUST00000021450.6">
    <property type="protein sequence ID" value="ENSMUSP00000021450.5"/>
    <property type="gene ID" value="ENSMUSG00000021054.7"/>
</dbReference>
<dbReference type="GeneID" id="81535"/>
<dbReference type="KEGG" id="mmu:81535"/>
<dbReference type="UCSC" id="uc007nxk.2">
    <property type="organism name" value="mouse"/>
</dbReference>
<dbReference type="AGR" id="MGI:2135760"/>
<dbReference type="CTD" id="81537"/>
<dbReference type="MGI" id="MGI:2135760">
    <property type="gene designation" value="Sgpp1"/>
</dbReference>
<dbReference type="VEuPathDB" id="HostDB:ENSMUSG00000021054"/>
<dbReference type="eggNOG" id="KOG2822">
    <property type="taxonomic scope" value="Eukaryota"/>
</dbReference>
<dbReference type="GeneTree" id="ENSGT00940000158836"/>
<dbReference type="HOGENOM" id="CLU_043042_1_0_1"/>
<dbReference type="InParanoid" id="Q9JI99"/>
<dbReference type="OMA" id="GRWEYPY"/>
<dbReference type="OrthoDB" id="301434at2759"/>
<dbReference type="PhylomeDB" id="Q9JI99"/>
<dbReference type="TreeFam" id="TF323419"/>
<dbReference type="Reactome" id="R-MMU-9845614">
    <property type="pathway name" value="Sphingolipid catabolism"/>
</dbReference>
<dbReference type="BioGRID-ORCS" id="81535">
    <property type="hits" value="2 hits in 80 CRISPR screens"/>
</dbReference>
<dbReference type="ChiTaRS" id="Sgpp1">
    <property type="organism name" value="mouse"/>
</dbReference>
<dbReference type="PRO" id="PR:Q9JI99"/>
<dbReference type="Proteomes" id="UP000000589">
    <property type="component" value="Chromosome 12"/>
</dbReference>
<dbReference type="RNAct" id="Q9JI99">
    <property type="molecule type" value="protein"/>
</dbReference>
<dbReference type="Bgee" id="ENSMUSG00000021054">
    <property type="expression patterns" value="Expressed in seminal vesicle and 264 other cell types or tissues"/>
</dbReference>
<dbReference type="ExpressionAtlas" id="Q9JI99">
    <property type="expression patterns" value="baseline and differential"/>
</dbReference>
<dbReference type="GO" id="GO:0005783">
    <property type="term" value="C:endoplasmic reticulum"/>
    <property type="evidence" value="ECO:0000314"/>
    <property type="project" value="MGI"/>
</dbReference>
<dbReference type="GO" id="GO:0005789">
    <property type="term" value="C:endoplasmic reticulum membrane"/>
    <property type="evidence" value="ECO:0007669"/>
    <property type="project" value="UniProtKB-SubCell"/>
</dbReference>
<dbReference type="GO" id="GO:0016020">
    <property type="term" value="C:membrane"/>
    <property type="evidence" value="ECO:0000314"/>
    <property type="project" value="MGI"/>
</dbReference>
<dbReference type="GO" id="GO:0005886">
    <property type="term" value="C:plasma membrane"/>
    <property type="evidence" value="ECO:0007669"/>
    <property type="project" value="UniProtKB-SubCell"/>
</dbReference>
<dbReference type="GO" id="GO:0070780">
    <property type="term" value="F:dihydrosphingosine-1-phosphate phosphatase activity"/>
    <property type="evidence" value="ECO:0007669"/>
    <property type="project" value="RHEA"/>
</dbReference>
<dbReference type="GO" id="GO:0042392">
    <property type="term" value="F:sphingosine-1-phosphate phosphatase activity"/>
    <property type="evidence" value="ECO:0000314"/>
    <property type="project" value="MGI"/>
</dbReference>
<dbReference type="GO" id="GO:0035621">
    <property type="term" value="P:ER to Golgi ceramide transport"/>
    <property type="evidence" value="ECO:0000250"/>
    <property type="project" value="UniProtKB"/>
</dbReference>
<dbReference type="GO" id="GO:0097191">
    <property type="term" value="P:extrinsic apoptotic signaling pathway"/>
    <property type="evidence" value="ECO:0000314"/>
    <property type="project" value="MGI"/>
</dbReference>
<dbReference type="GO" id="GO:0097193">
    <property type="term" value="P:intrinsic apoptotic signaling pathway"/>
    <property type="evidence" value="ECO:0000314"/>
    <property type="project" value="MGI"/>
</dbReference>
<dbReference type="GO" id="GO:0045682">
    <property type="term" value="P:regulation of epidermis development"/>
    <property type="evidence" value="ECO:0000315"/>
    <property type="project" value="UniProtKB"/>
</dbReference>
<dbReference type="GO" id="GO:0045616">
    <property type="term" value="P:regulation of keratinocyte differentiation"/>
    <property type="evidence" value="ECO:0000315"/>
    <property type="project" value="UniProtKB"/>
</dbReference>
<dbReference type="GO" id="GO:0006668">
    <property type="term" value="P:sphinganine-1-phosphate metabolic process"/>
    <property type="evidence" value="ECO:0000314"/>
    <property type="project" value="MGI"/>
</dbReference>
<dbReference type="GO" id="GO:0006665">
    <property type="term" value="P:sphingolipid metabolic process"/>
    <property type="evidence" value="ECO:0000314"/>
    <property type="project" value="MGI"/>
</dbReference>
<dbReference type="GO" id="GO:0006670">
    <property type="term" value="P:sphingosine metabolic process"/>
    <property type="evidence" value="ECO:0000314"/>
    <property type="project" value="MGI"/>
</dbReference>
<dbReference type="CDD" id="cd03388">
    <property type="entry name" value="PAP2_SPPase1"/>
    <property type="match status" value="1"/>
</dbReference>
<dbReference type="FunFam" id="1.20.144.10:FF:000011">
    <property type="entry name" value="sphingosine-1-phosphate phosphatase 1"/>
    <property type="match status" value="1"/>
</dbReference>
<dbReference type="Gene3D" id="1.20.144.10">
    <property type="entry name" value="Phosphatidic acid phosphatase type 2/haloperoxidase"/>
    <property type="match status" value="1"/>
</dbReference>
<dbReference type="InterPro" id="IPR036938">
    <property type="entry name" value="P_Acid_Pase_2/haloperoxi_sf"/>
</dbReference>
<dbReference type="InterPro" id="IPR000326">
    <property type="entry name" value="P_Acid_Pase_2/haloperoxidase"/>
</dbReference>
<dbReference type="PANTHER" id="PTHR14969:SF45">
    <property type="entry name" value="SPHINGOSINE-1-PHOSPHATE PHOSPHATASE 1"/>
    <property type="match status" value="1"/>
</dbReference>
<dbReference type="PANTHER" id="PTHR14969">
    <property type="entry name" value="SPHINGOSINE-1-PHOSPHATE PHOSPHOHYDROLASE"/>
    <property type="match status" value="1"/>
</dbReference>
<dbReference type="Pfam" id="PF01569">
    <property type="entry name" value="PAP2"/>
    <property type="match status" value="1"/>
</dbReference>
<dbReference type="SMART" id="SM00014">
    <property type="entry name" value="acidPPc"/>
    <property type="match status" value="1"/>
</dbReference>
<dbReference type="SUPFAM" id="SSF48317">
    <property type="entry name" value="Acid phosphatase/Vanadium-dependent haloperoxidase"/>
    <property type="match status" value="1"/>
</dbReference>
<comment type="function">
    <text evidence="2 5 6 7 9 10">Specifically dephosphorylates sphingosine 1-phosphate (S1P), dihydro-S1P, and phyto-S1P (PubMed:10859351, PubMed:11756451). Does not act on ceramide 1-phosphate, lysophosphatidic acid or phosphatidic acid. Sphingosine-1-phosphate phosphatase activity is needed for efficient recycling of sphingosine into the sphingolipid synthesis pathway. Regulates the intracellular levels of the bioactive sphingolipid metabolite S1P that regulates diverse biological processes acting both as an extracellular receptor ligand or as an intracellular second messenger (PubMed:10859351, Ref.2). Involved in efficient ceramide synthesis from exogenous sphingoid bases. Converts S1P to sphingosine, which is readily metabolized to ceramide via ceramide synthase (PubMed:12235122, PubMed:17895250). In concert with sphingosine kinase 2 (SphK2), recycles sphingosine into ceramide through a phosphorylation/dephosphorylation cycle (PubMed:17895250). Regulates endoplasmic-to-Golgi trafficking of ceramides, resulting in the regulation of ceramide levels in the endoplasmic reticulum, preferentially long-chain ceramide species, and influences the anterograde membrane transport of both ceramide and proteins from the endoplasmic reticulum to the Golgi apparatus (By similarity). The modulation of intracellular ceramide levels in turn regulates apoptosis (PubMed:12235122). Via S1P levels, modulates resting tone, intracellular Ca(2+) and myogenic vasoconstriction in resistance arteries. Also involved in unfolded protein response (UPR) and ER stress-induced autophagy via regulation of intracellular S1P levels (By similarity). Involved in the regulation of epidermal homeostasis and keratinocyte differentiation (PubMed:23637227).</text>
</comment>
<comment type="catalytic activity">
    <reaction evidence="6 8">
        <text>sphinganine 1-phosphate + H2O = sphinganine + phosphate</text>
        <dbReference type="Rhea" id="RHEA:27514"/>
        <dbReference type="ChEBI" id="CHEBI:15377"/>
        <dbReference type="ChEBI" id="CHEBI:43474"/>
        <dbReference type="ChEBI" id="CHEBI:57817"/>
        <dbReference type="ChEBI" id="CHEBI:57939"/>
    </reaction>
    <physiologicalReaction direction="left-to-right" evidence="6 8">
        <dbReference type="Rhea" id="RHEA:27515"/>
    </physiologicalReaction>
</comment>
<comment type="catalytic activity">
    <reaction evidence="6">
        <text>sphing-4-enine 1-phosphate + H2O = sphing-4-enine + phosphate</text>
        <dbReference type="Rhea" id="RHEA:27518"/>
        <dbReference type="ChEBI" id="CHEBI:15377"/>
        <dbReference type="ChEBI" id="CHEBI:43474"/>
        <dbReference type="ChEBI" id="CHEBI:57756"/>
        <dbReference type="ChEBI" id="CHEBI:60119"/>
    </reaction>
    <physiologicalReaction direction="left-to-right" evidence="6">
        <dbReference type="Rhea" id="RHEA:27519"/>
    </physiologicalReaction>
</comment>
<comment type="activity regulation">
    <text evidence="6">Inhibited by NaF, sodium orthovanadate, propanolol, and N-ethylmaleimide.</text>
</comment>
<comment type="biophysicochemical properties">
    <kinetics>
        <KM evidence="6">38.5 uM for sphingosine 1-phosphate</KM>
        <Vmax evidence="6">36.4 nmol/min/mg enzyme for sphingosine 1-phosphate</Vmax>
    </kinetics>
    <phDependence>
        <text evidence="6">Optimum pH is 6-7.5.</text>
    </phDependence>
</comment>
<comment type="subcellular location">
    <subcellularLocation>
        <location evidence="7">Endoplasmic reticulum membrane</location>
        <topology evidence="3">Multi-pass membrane protein</topology>
    </subcellularLocation>
    <subcellularLocation>
        <location evidence="7">Cell membrane</location>
        <topology evidence="3">Multi-pass membrane protein</topology>
    </subcellularLocation>
    <text evidence="7">Mainly found in intracellular membrane fractions.</text>
</comment>
<comment type="tissue specificity">
    <text evidence="5 10">Highly expressed in liver and kidney. Expressed in epidermis, in the stratum granulosum and the stratum spinosum (PubMed:23637227).</text>
</comment>
<comment type="disruption phenotype">
    <text evidence="10">Mutants appear normal at birth, but during the first week of life they exhibit stunted growth and suffer desquamation, with most dying before weaning (PubMed:23637227). Their subcorneal layers, including the stratum granulosum, stratum spinosum, and stratum basale, are significantly thicker, whereas the stratum corneum is thinner than in wild-type mic (PubMed:23637227).</text>
</comment>
<comment type="similarity">
    <text evidence="12">Belongs to the type 2 lipid phosphate phosphatase family.</text>
</comment>
<organism>
    <name type="scientific">Mus musculus</name>
    <name type="common">Mouse</name>
    <dbReference type="NCBI Taxonomy" id="10090"/>
    <lineage>
        <taxon>Eukaryota</taxon>
        <taxon>Metazoa</taxon>
        <taxon>Chordata</taxon>
        <taxon>Craniata</taxon>
        <taxon>Vertebrata</taxon>
        <taxon>Euteleostomi</taxon>
        <taxon>Mammalia</taxon>
        <taxon>Eutheria</taxon>
        <taxon>Euarchontoglires</taxon>
        <taxon>Glires</taxon>
        <taxon>Rodentia</taxon>
        <taxon>Myomorpha</taxon>
        <taxon>Muroidea</taxon>
        <taxon>Muridae</taxon>
        <taxon>Murinae</taxon>
        <taxon>Mus</taxon>
        <taxon>Mus</taxon>
    </lineage>
</organism>
<accession>Q9JI99</accession>
<keyword id="KW-1003">Cell membrane</keyword>
<keyword id="KW-0256">Endoplasmic reticulum</keyword>
<keyword id="KW-0378">Hydrolase</keyword>
<keyword id="KW-0443">Lipid metabolism</keyword>
<keyword id="KW-0472">Membrane</keyword>
<keyword id="KW-0597">Phosphoprotein</keyword>
<keyword id="KW-1185">Reference proteome</keyword>
<keyword id="KW-0812">Transmembrane</keyword>
<keyword id="KW-1133">Transmembrane helix</keyword>
<feature type="chain" id="PRO_0000114478" description="Sphingosine-1-phosphate phosphatase 1">
    <location>
        <begin position="1"/>
        <end position="430"/>
    </location>
</feature>
<feature type="transmembrane region" description="Helical" evidence="3">
    <location>
        <begin position="121"/>
        <end position="141"/>
    </location>
</feature>
<feature type="transmembrane region" description="Helical" evidence="3">
    <location>
        <begin position="152"/>
        <end position="172"/>
    </location>
</feature>
<feature type="transmembrane region" description="Helical" evidence="3">
    <location>
        <begin position="193"/>
        <end position="213"/>
    </location>
</feature>
<feature type="transmembrane region" description="Helical" evidence="3">
    <location>
        <begin position="216"/>
        <end position="236"/>
    </location>
</feature>
<feature type="transmembrane region" description="Helical" evidence="3">
    <location>
        <begin position="246"/>
        <end position="266"/>
    </location>
</feature>
<feature type="transmembrane region" description="Helical" evidence="3">
    <location>
        <begin position="279"/>
        <end position="299"/>
    </location>
</feature>
<feature type="transmembrane region" description="Helical" evidence="3">
    <location>
        <begin position="311"/>
        <end position="331"/>
    </location>
</feature>
<feature type="transmembrane region" description="Helical" evidence="3">
    <location>
        <begin position="348"/>
        <end position="368"/>
    </location>
</feature>
<feature type="transmembrane region" description="Helical" evidence="3">
    <location>
        <begin position="409"/>
        <end position="429"/>
    </location>
</feature>
<feature type="region of interest" description="Disordered" evidence="4">
    <location>
        <begin position="34"/>
        <end position="103"/>
    </location>
</feature>
<feature type="region of interest" description="Phosphatase sequence motif I" evidence="12">
    <location>
        <begin position="167"/>
        <end position="175"/>
    </location>
</feature>
<feature type="region of interest" description="Phosphatase sequence motif II" evidence="12">
    <location>
        <begin position="194"/>
        <end position="197"/>
    </location>
</feature>
<feature type="region of interest" description="Phosphatase sequence motif III" evidence="12">
    <location>
        <begin position="237"/>
        <end position="248"/>
    </location>
</feature>
<feature type="active site" description="Proton donor" evidence="1">
    <location>
        <position position="197"/>
    </location>
</feature>
<feature type="active site" description="Nucleophile" evidence="1">
    <location>
        <position position="244"/>
    </location>
</feature>
<feature type="site" description="Stabilizes the active site histidine for nucleophilic attack" evidence="1">
    <location>
        <position position="248"/>
    </location>
</feature>
<feature type="modified residue" description="Phosphoserine" evidence="14 15 16">
    <location>
        <position position="101"/>
    </location>
</feature>
<feature type="modified residue" description="Phosphothreonine" evidence="2">
    <location>
        <position position="103"/>
    </location>
</feature>
<name>SGPP1_MOUSE</name>